<proteinExistence type="inferred from homology"/>
<feature type="chain" id="PRO_1000214507" description="Large ribosomal subunit protein uL3">
    <location>
        <begin position="1"/>
        <end position="211"/>
    </location>
</feature>
<feature type="region of interest" description="Disordered" evidence="2">
    <location>
        <begin position="130"/>
        <end position="154"/>
    </location>
</feature>
<protein>
    <recommendedName>
        <fullName evidence="1">Large ribosomal subunit protein uL3</fullName>
    </recommendedName>
    <alternativeName>
        <fullName evidence="3">50S ribosomal protein L3</fullName>
    </alternativeName>
</protein>
<dbReference type="EMBL" id="CP001104">
    <property type="protein sequence ID" value="ACR71335.1"/>
    <property type="molecule type" value="Genomic_DNA"/>
</dbReference>
<dbReference type="RefSeq" id="WP_012738572.1">
    <property type="nucleotide sequence ID" value="NC_012778.1"/>
</dbReference>
<dbReference type="SMR" id="C4Z2T0"/>
<dbReference type="STRING" id="515620.EUBELI_00299"/>
<dbReference type="GeneID" id="41355072"/>
<dbReference type="KEGG" id="eel:EUBELI_00299"/>
<dbReference type="eggNOG" id="COG0087">
    <property type="taxonomic scope" value="Bacteria"/>
</dbReference>
<dbReference type="HOGENOM" id="CLU_044142_4_1_9"/>
<dbReference type="Proteomes" id="UP000001476">
    <property type="component" value="Chromosome"/>
</dbReference>
<dbReference type="GO" id="GO:0022625">
    <property type="term" value="C:cytosolic large ribosomal subunit"/>
    <property type="evidence" value="ECO:0007669"/>
    <property type="project" value="TreeGrafter"/>
</dbReference>
<dbReference type="GO" id="GO:0019843">
    <property type="term" value="F:rRNA binding"/>
    <property type="evidence" value="ECO:0007669"/>
    <property type="project" value="UniProtKB-UniRule"/>
</dbReference>
<dbReference type="GO" id="GO:0003735">
    <property type="term" value="F:structural constituent of ribosome"/>
    <property type="evidence" value="ECO:0007669"/>
    <property type="project" value="InterPro"/>
</dbReference>
<dbReference type="GO" id="GO:0006412">
    <property type="term" value="P:translation"/>
    <property type="evidence" value="ECO:0007669"/>
    <property type="project" value="UniProtKB-UniRule"/>
</dbReference>
<dbReference type="FunFam" id="2.40.30.10:FF:000004">
    <property type="entry name" value="50S ribosomal protein L3"/>
    <property type="match status" value="1"/>
</dbReference>
<dbReference type="FunFam" id="3.30.160.810:FF:000001">
    <property type="entry name" value="50S ribosomal protein L3"/>
    <property type="match status" value="1"/>
</dbReference>
<dbReference type="Gene3D" id="3.30.160.810">
    <property type="match status" value="1"/>
</dbReference>
<dbReference type="Gene3D" id="2.40.30.10">
    <property type="entry name" value="Translation factors"/>
    <property type="match status" value="1"/>
</dbReference>
<dbReference type="HAMAP" id="MF_01325_B">
    <property type="entry name" value="Ribosomal_uL3_B"/>
    <property type="match status" value="1"/>
</dbReference>
<dbReference type="InterPro" id="IPR000597">
    <property type="entry name" value="Ribosomal_uL3"/>
</dbReference>
<dbReference type="InterPro" id="IPR019927">
    <property type="entry name" value="Ribosomal_uL3_bac/org-type"/>
</dbReference>
<dbReference type="InterPro" id="IPR019926">
    <property type="entry name" value="Ribosomal_uL3_CS"/>
</dbReference>
<dbReference type="InterPro" id="IPR009000">
    <property type="entry name" value="Transl_B-barrel_sf"/>
</dbReference>
<dbReference type="NCBIfam" id="TIGR03625">
    <property type="entry name" value="L3_bact"/>
    <property type="match status" value="1"/>
</dbReference>
<dbReference type="PANTHER" id="PTHR11229">
    <property type="entry name" value="50S RIBOSOMAL PROTEIN L3"/>
    <property type="match status" value="1"/>
</dbReference>
<dbReference type="PANTHER" id="PTHR11229:SF16">
    <property type="entry name" value="LARGE RIBOSOMAL SUBUNIT PROTEIN UL3C"/>
    <property type="match status" value="1"/>
</dbReference>
<dbReference type="Pfam" id="PF00297">
    <property type="entry name" value="Ribosomal_L3"/>
    <property type="match status" value="1"/>
</dbReference>
<dbReference type="SUPFAM" id="SSF50447">
    <property type="entry name" value="Translation proteins"/>
    <property type="match status" value="1"/>
</dbReference>
<dbReference type="PROSITE" id="PS00474">
    <property type="entry name" value="RIBOSOMAL_L3"/>
    <property type="match status" value="1"/>
</dbReference>
<gene>
    <name evidence="1" type="primary">rplC</name>
    <name type="ordered locus">EUBELI_00299</name>
</gene>
<accession>C4Z2T0</accession>
<evidence type="ECO:0000255" key="1">
    <source>
        <dbReference type="HAMAP-Rule" id="MF_01325"/>
    </source>
</evidence>
<evidence type="ECO:0000256" key="2">
    <source>
        <dbReference type="SAM" id="MobiDB-lite"/>
    </source>
</evidence>
<evidence type="ECO:0000305" key="3"/>
<name>RL3_LACE2</name>
<sequence length="211" mass="22818">MKKAILATKVGMTQIFNEDGVLTPVTVLQAGPCVVTQVKTVENDGYDAVQVGFADIREKLVNKPVKGHFDKAEVPYKRFLREFKFENASEYSVKDEIKADIFAAGDKVDATAISKGKGFQGAIKRLGQSRGPMAHGSKFHRHQGSNGSATTPGRVFKGKGMPGHMGSKRITIQNLEVVRVDVENNVILVKGAVPGPKKSLVTLKETVKAAK</sequence>
<organism>
    <name type="scientific">Lachnospira eligens (strain ATCC 27750 / DSM 3376 / VPI C15-48 / C15-B4)</name>
    <name type="common">Eubacterium eligens</name>
    <dbReference type="NCBI Taxonomy" id="515620"/>
    <lineage>
        <taxon>Bacteria</taxon>
        <taxon>Bacillati</taxon>
        <taxon>Bacillota</taxon>
        <taxon>Clostridia</taxon>
        <taxon>Lachnospirales</taxon>
        <taxon>Lachnospiraceae</taxon>
        <taxon>Lachnospira</taxon>
    </lineage>
</organism>
<reference key="1">
    <citation type="journal article" date="2009" name="Proc. Natl. Acad. Sci. U.S.A.">
        <title>Characterizing a model human gut microbiota composed of members of its two dominant bacterial phyla.</title>
        <authorList>
            <person name="Mahowald M.A."/>
            <person name="Rey F.E."/>
            <person name="Seedorf H."/>
            <person name="Turnbaugh P.J."/>
            <person name="Fulton R.S."/>
            <person name="Wollam A."/>
            <person name="Shah N."/>
            <person name="Wang C."/>
            <person name="Magrini V."/>
            <person name="Wilson R.K."/>
            <person name="Cantarel B.L."/>
            <person name="Coutinho P.M."/>
            <person name="Henrissat B."/>
            <person name="Crock L.W."/>
            <person name="Russell A."/>
            <person name="Verberkmoes N.C."/>
            <person name="Hettich R.L."/>
            <person name="Gordon J.I."/>
        </authorList>
    </citation>
    <scope>NUCLEOTIDE SEQUENCE [LARGE SCALE GENOMIC DNA]</scope>
    <source>
        <strain>ATCC 27750 / DSM 3376 / VPI C15-48 / C15-B4</strain>
    </source>
</reference>
<comment type="function">
    <text evidence="1">One of the primary rRNA binding proteins, it binds directly near the 3'-end of the 23S rRNA, where it nucleates assembly of the 50S subunit.</text>
</comment>
<comment type="subunit">
    <text evidence="1">Part of the 50S ribosomal subunit. Forms a cluster with proteins L14 and L19.</text>
</comment>
<comment type="similarity">
    <text evidence="1">Belongs to the universal ribosomal protein uL3 family.</text>
</comment>
<keyword id="KW-1185">Reference proteome</keyword>
<keyword id="KW-0687">Ribonucleoprotein</keyword>
<keyword id="KW-0689">Ribosomal protein</keyword>
<keyword id="KW-0694">RNA-binding</keyword>
<keyword id="KW-0699">rRNA-binding</keyword>